<sequence length="72" mass="7348">MSLGVLAAAIAVGLGALGAGIANGLIVSRTIEGIARQPELRPVLQTTMFIGVALVEALPIIGVVFSFIYLGR</sequence>
<gene>
    <name evidence="1" type="primary">atpE</name>
</gene>
<reference key="1">
    <citation type="submission" date="1994-08" db="EMBL/GenBank/DDBJ databases">
        <authorList>
            <person name="Ishizuka M."/>
            <person name="Kamei T."/>
        </authorList>
    </citation>
    <scope>NUCLEOTIDE SEQUENCE [GENOMIC DNA]</scope>
</reference>
<feature type="chain" id="PRO_0000112138" description="ATP synthase subunit c">
    <location>
        <begin position="1"/>
        <end position="72"/>
    </location>
</feature>
<feature type="transmembrane region" description="Helical" evidence="1">
    <location>
        <begin position="1"/>
        <end position="21"/>
    </location>
</feature>
<feature type="transmembrane region" description="Helical" evidence="1">
    <location>
        <begin position="48"/>
        <end position="68"/>
    </location>
</feature>
<feature type="site" description="Reversibly protonated during proton transport" evidence="1">
    <location>
        <position position="56"/>
    </location>
</feature>
<protein>
    <recommendedName>
        <fullName evidence="1">ATP synthase subunit c</fullName>
    </recommendedName>
    <alternativeName>
        <fullName evidence="1">ATP synthase F(0) sector subunit c</fullName>
    </alternativeName>
    <alternativeName>
        <fullName evidence="1">F-type ATPase subunit c</fullName>
        <shortName evidence="1">F-ATPase subunit c</shortName>
    </alternativeName>
    <alternativeName>
        <fullName evidence="1">Lipid-binding protein</fullName>
    </alternativeName>
</protein>
<name>ATPL_GEOSE</name>
<evidence type="ECO:0000255" key="1">
    <source>
        <dbReference type="HAMAP-Rule" id="MF_01396"/>
    </source>
</evidence>
<comment type="function">
    <text evidence="1">F(1)F(0) ATP synthase produces ATP from ADP in the presence of a proton or sodium gradient. F-type ATPases consist of two structural domains, F(1) containing the extramembraneous catalytic core and F(0) containing the membrane proton channel, linked together by a central stalk and a peripheral stalk. During catalysis, ATP synthesis in the catalytic domain of F(1) is coupled via a rotary mechanism of the central stalk subunits to proton translocation.</text>
</comment>
<comment type="function">
    <text evidence="1">Key component of the F(0) channel; it plays a direct role in translocation across the membrane. A homomeric c-ring of between 10-14 subunits forms the central stalk rotor element with the F(1) delta and epsilon subunits.</text>
</comment>
<comment type="subunit">
    <text evidence="1">F-type ATPases have 2 components, F(1) - the catalytic core - and F(0) - the membrane proton channel. F(1) has five subunits: alpha(3), beta(3), gamma(1), delta(1), epsilon(1). F(0) has three main subunits: a(1), b(2) and c(10-14). The alpha and beta chains form an alternating ring which encloses part of the gamma chain. F(1) is attached to F(0) by a central stalk formed by the gamma and epsilon chains, while a peripheral stalk is formed by the delta and b chains.</text>
</comment>
<comment type="subcellular location">
    <subcellularLocation>
        <location evidence="1">Cell membrane</location>
        <topology evidence="1">Multi-pass membrane protein</topology>
    </subcellularLocation>
</comment>
<comment type="similarity">
    <text evidence="1">Belongs to the ATPase C chain family.</text>
</comment>
<keyword id="KW-0066">ATP synthesis</keyword>
<keyword id="KW-1003">Cell membrane</keyword>
<keyword id="KW-0138">CF(0)</keyword>
<keyword id="KW-0375">Hydrogen ion transport</keyword>
<keyword id="KW-0406">Ion transport</keyword>
<keyword id="KW-0446">Lipid-binding</keyword>
<keyword id="KW-0472">Membrane</keyword>
<keyword id="KW-0812">Transmembrane</keyword>
<keyword id="KW-1133">Transmembrane helix</keyword>
<keyword id="KW-0813">Transport</keyword>
<accession>P42011</accession>
<proteinExistence type="inferred from homology"/>
<organism>
    <name type="scientific">Geobacillus stearothermophilus</name>
    <name type="common">Bacillus stearothermophilus</name>
    <dbReference type="NCBI Taxonomy" id="1422"/>
    <lineage>
        <taxon>Bacteria</taxon>
        <taxon>Bacillati</taxon>
        <taxon>Bacillota</taxon>
        <taxon>Bacilli</taxon>
        <taxon>Bacillales</taxon>
        <taxon>Anoxybacillaceae</taxon>
        <taxon>Geobacillus</taxon>
    </lineage>
</organism>
<dbReference type="EMBL" id="D38059">
    <property type="protein sequence ID" value="BAA07251.1"/>
    <property type="molecule type" value="Genomic_DNA"/>
</dbReference>
<dbReference type="BMRB" id="P42011"/>
<dbReference type="SMR" id="P42011"/>
<dbReference type="GO" id="GO:0005886">
    <property type="term" value="C:plasma membrane"/>
    <property type="evidence" value="ECO:0007669"/>
    <property type="project" value="UniProtKB-SubCell"/>
</dbReference>
<dbReference type="GO" id="GO:0045259">
    <property type="term" value="C:proton-transporting ATP synthase complex"/>
    <property type="evidence" value="ECO:0007669"/>
    <property type="project" value="UniProtKB-KW"/>
</dbReference>
<dbReference type="GO" id="GO:0033177">
    <property type="term" value="C:proton-transporting two-sector ATPase complex, proton-transporting domain"/>
    <property type="evidence" value="ECO:0007669"/>
    <property type="project" value="InterPro"/>
</dbReference>
<dbReference type="GO" id="GO:0008289">
    <property type="term" value="F:lipid binding"/>
    <property type="evidence" value="ECO:0007669"/>
    <property type="project" value="UniProtKB-KW"/>
</dbReference>
<dbReference type="GO" id="GO:0046933">
    <property type="term" value="F:proton-transporting ATP synthase activity, rotational mechanism"/>
    <property type="evidence" value="ECO:0007669"/>
    <property type="project" value="UniProtKB-UniRule"/>
</dbReference>
<dbReference type="CDD" id="cd18185">
    <property type="entry name" value="ATP-synt_Fo_c_ATPE"/>
    <property type="match status" value="1"/>
</dbReference>
<dbReference type="FunFam" id="1.20.20.10:FF:000004">
    <property type="entry name" value="ATP synthase subunit c"/>
    <property type="match status" value="1"/>
</dbReference>
<dbReference type="Gene3D" id="1.20.20.10">
    <property type="entry name" value="F1F0 ATP synthase subunit C"/>
    <property type="match status" value="1"/>
</dbReference>
<dbReference type="HAMAP" id="MF_01396">
    <property type="entry name" value="ATP_synth_c_bact"/>
    <property type="match status" value="1"/>
</dbReference>
<dbReference type="InterPro" id="IPR005953">
    <property type="entry name" value="ATP_synth_csu_bac/chlpt"/>
</dbReference>
<dbReference type="InterPro" id="IPR000454">
    <property type="entry name" value="ATP_synth_F0_csu"/>
</dbReference>
<dbReference type="InterPro" id="IPR020537">
    <property type="entry name" value="ATP_synth_F0_csu_DDCD_BS"/>
</dbReference>
<dbReference type="InterPro" id="IPR038662">
    <property type="entry name" value="ATP_synth_F0_csu_sf"/>
</dbReference>
<dbReference type="InterPro" id="IPR002379">
    <property type="entry name" value="ATPase_proteolipid_c-like_dom"/>
</dbReference>
<dbReference type="InterPro" id="IPR035921">
    <property type="entry name" value="F/V-ATP_Csub_sf"/>
</dbReference>
<dbReference type="NCBIfam" id="TIGR01260">
    <property type="entry name" value="ATP_synt_c"/>
    <property type="match status" value="1"/>
</dbReference>
<dbReference type="NCBIfam" id="NF005363">
    <property type="entry name" value="PRK06876.1"/>
    <property type="match status" value="1"/>
</dbReference>
<dbReference type="Pfam" id="PF00137">
    <property type="entry name" value="ATP-synt_C"/>
    <property type="match status" value="1"/>
</dbReference>
<dbReference type="PRINTS" id="PR00124">
    <property type="entry name" value="ATPASEC"/>
</dbReference>
<dbReference type="SUPFAM" id="SSF81333">
    <property type="entry name" value="F1F0 ATP synthase subunit C"/>
    <property type="match status" value="1"/>
</dbReference>
<dbReference type="PROSITE" id="PS00605">
    <property type="entry name" value="ATPASE_C"/>
    <property type="match status" value="1"/>
</dbReference>